<keyword id="KW-0067">ATP-binding</keyword>
<keyword id="KW-0460">Magnesium</keyword>
<keyword id="KW-0464">Manganese</keyword>
<keyword id="KW-0479">Metal-binding</keyword>
<keyword id="KW-0547">Nucleotide-binding</keyword>
<keyword id="KW-0548">Nucleotidyltransferase</keyword>
<keyword id="KW-1185">Reference proteome</keyword>
<keyword id="KW-0808">Transferase</keyword>
<organism>
    <name type="scientific">Corynebacterium efficiens (strain DSM 44549 / YS-314 / AJ 12310 / JCM 11189 / NBRC 100395)</name>
    <dbReference type="NCBI Taxonomy" id="196164"/>
    <lineage>
        <taxon>Bacteria</taxon>
        <taxon>Bacillati</taxon>
        <taxon>Actinomycetota</taxon>
        <taxon>Actinomycetes</taxon>
        <taxon>Mycobacteriales</taxon>
        <taxon>Corynebacteriaceae</taxon>
        <taxon>Corynebacterium</taxon>
    </lineage>
</organism>
<protein>
    <recommendedName>
        <fullName evidence="1">Protein nucleotidyltransferase YdiU</fullName>
        <ecNumber evidence="1">2.7.7.-</ecNumber>
    </recommendedName>
    <alternativeName>
        <fullName evidence="1">Protein adenylyltransferase YdiU</fullName>
        <ecNumber evidence="1">2.7.7.108</ecNumber>
    </alternativeName>
    <alternativeName>
        <fullName evidence="1">Protein uridylyltransferase YdiU</fullName>
        <ecNumber evidence="1">2.7.7.-</ecNumber>
    </alternativeName>
</protein>
<name>SELO_COREF</name>
<evidence type="ECO:0000255" key="1">
    <source>
        <dbReference type="HAMAP-Rule" id="MF_00692"/>
    </source>
</evidence>
<proteinExistence type="inferred from homology"/>
<gene>
    <name evidence="1" type="primary">ydiU</name>
    <name evidence="1" type="synonym">selO</name>
    <name type="ordered locus">CE1893</name>
</gene>
<reference key="1">
    <citation type="journal article" date="2003" name="Genome Res.">
        <title>Comparative complete genome sequence analysis of the amino acid replacements responsible for the thermostability of Corynebacterium efficiens.</title>
        <authorList>
            <person name="Nishio Y."/>
            <person name="Nakamura Y."/>
            <person name="Kawarabayasi Y."/>
            <person name="Usuda Y."/>
            <person name="Kimura E."/>
            <person name="Sugimoto S."/>
            <person name="Matsui K."/>
            <person name="Yamagishi A."/>
            <person name="Kikuchi H."/>
            <person name="Ikeo K."/>
            <person name="Gojobori T."/>
        </authorList>
    </citation>
    <scope>NUCLEOTIDE SEQUENCE [LARGE SCALE GENOMIC DNA]</scope>
    <source>
        <strain>DSM 44549 / YS-314 / AJ 12310 / JCM 11189 / NBRC 100395</strain>
    </source>
</reference>
<comment type="function">
    <text evidence="1">Nucleotidyltransferase involved in the post-translational modification of proteins. It can catalyze the addition of adenosine monophosphate (AMP) or uridine monophosphate (UMP) to a protein, resulting in modifications known as AMPylation and UMPylation.</text>
</comment>
<comment type="catalytic activity">
    <reaction evidence="1">
        <text>L-seryl-[protein] + ATP = 3-O-(5'-adenylyl)-L-seryl-[protein] + diphosphate</text>
        <dbReference type="Rhea" id="RHEA:58120"/>
        <dbReference type="Rhea" id="RHEA-COMP:9863"/>
        <dbReference type="Rhea" id="RHEA-COMP:15073"/>
        <dbReference type="ChEBI" id="CHEBI:29999"/>
        <dbReference type="ChEBI" id="CHEBI:30616"/>
        <dbReference type="ChEBI" id="CHEBI:33019"/>
        <dbReference type="ChEBI" id="CHEBI:142516"/>
        <dbReference type="EC" id="2.7.7.108"/>
    </reaction>
</comment>
<comment type="catalytic activity">
    <reaction evidence="1">
        <text>L-threonyl-[protein] + ATP = 3-O-(5'-adenylyl)-L-threonyl-[protein] + diphosphate</text>
        <dbReference type="Rhea" id="RHEA:54292"/>
        <dbReference type="Rhea" id="RHEA-COMP:11060"/>
        <dbReference type="Rhea" id="RHEA-COMP:13847"/>
        <dbReference type="ChEBI" id="CHEBI:30013"/>
        <dbReference type="ChEBI" id="CHEBI:30616"/>
        <dbReference type="ChEBI" id="CHEBI:33019"/>
        <dbReference type="ChEBI" id="CHEBI:138113"/>
        <dbReference type="EC" id="2.7.7.108"/>
    </reaction>
</comment>
<comment type="catalytic activity">
    <reaction evidence="1">
        <text>L-tyrosyl-[protein] + ATP = O-(5'-adenylyl)-L-tyrosyl-[protein] + diphosphate</text>
        <dbReference type="Rhea" id="RHEA:54288"/>
        <dbReference type="Rhea" id="RHEA-COMP:10136"/>
        <dbReference type="Rhea" id="RHEA-COMP:13846"/>
        <dbReference type="ChEBI" id="CHEBI:30616"/>
        <dbReference type="ChEBI" id="CHEBI:33019"/>
        <dbReference type="ChEBI" id="CHEBI:46858"/>
        <dbReference type="ChEBI" id="CHEBI:83624"/>
        <dbReference type="EC" id="2.7.7.108"/>
    </reaction>
</comment>
<comment type="catalytic activity">
    <reaction evidence="1">
        <text>L-histidyl-[protein] + UTP = N(tele)-(5'-uridylyl)-L-histidyl-[protein] + diphosphate</text>
        <dbReference type="Rhea" id="RHEA:83891"/>
        <dbReference type="Rhea" id="RHEA-COMP:9745"/>
        <dbReference type="Rhea" id="RHEA-COMP:20239"/>
        <dbReference type="ChEBI" id="CHEBI:29979"/>
        <dbReference type="ChEBI" id="CHEBI:33019"/>
        <dbReference type="ChEBI" id="CHEBI:46398"/>
        <dbReference type="ChEBI" id="CHEBI:233474"/>
    </reaction>
</comment>
<comment type="catalytic activity">
    <reaction evidence="1">
        <text>L-seryl-[protein] + UTP = O-(5'-uridylyl)-L-seryl-[protein] + diphosphate</text>
        <dbReference type="Rhea" id="RHEA:64604"/>
        <dbReference type="Rhea" id="RHEA-COMP:9863"/>
        <dbReference type="Rhea" id="RHEA-COMP:16635"/>
        <dbReference type="ChEBI" id="CHEBI:29999"/>
        <dbReference type="ChEBI" id="CHEBI:33019"/>
        <dbReference type="ChEBI" id="CHEBI:46398"/>
        <dbReference type="ChEBI" id="CHEBI:156051"/>
    </reaction>
</comment>
<comment type="catalytic activity">
    <reaction evidence="1">
        <text>L-tyrosyl-[protein] + UTP = O-(5'-uridylyl)-L-tyrosyl-[protein] + diphosphate</text>
        <dbReference type="Rhea" id="RHEA:83887"/>
        <dbReference type="Rhea" id="RHEA-COMP:10136"/>
        <dbReference type="Rhea" id="RHEA-COMP:20238"/>
        <dbReference type="ChEBI" id="CHEBI:33019"/>
        <dbReference type="ChEBI" id="CHEBI:46398"/>
        <dbReference type="ChEBI" id="CHEBI:46858"/>
        <dbReference type="ChEBI" id="CHEBI:90602"/>
    </reaction>
</comment>
<comment type="cofactor">
    <cofactor evidence="1">
        <name>Mg(2+)</name>
        <dbReference type="ChEBI" id="CHEBI:18420"/>
    </cofactor>
    <cofactor evidence="1">
        <name>Mn(2+)</name>
        <dbReference type="ChEBI" id="CHEBI:29035"/>
    </cofactor>
</comment>
<comment type="similarity">
    <text evidence="1">Belongs to the SELO family.</text>
</comment>
<feature type="chain" id="PRO_0000121414" description="Protein nucleotidyltransferase YdiU">
    <location>
        <begin position="1"/>
        <end position="492"/>
    </location>
</feature>
<feature type="active site" description="Proton acceptor" evidence="1">
    <location>
        <position position="268"/>
    </location>
</feature>
<feature type="binding site" evidence="1">
    <location>
        <position position="101"/>
    </location>
    <ligand>
        <name>ATP</name>
        <dbReference type="ChEBI" id="CHEBI:30616"/>
    </ligand>
</feature>
<feature type="binding site" evidence="1">
    <location>
        <position position="103"/>
    </location>
    <ligand>
        <name>ATP</name>
        <dbReference type="ChEBI" id="CHEBI:30616"/>
    </ligand>
</feature>
<feature type="binding site" evidence="1">
    <location>
        <position position="104"/>
    </location>
    <ligand>
        <name>ATP</name>
        <dbReference type="ChEBI" id="CHEBI:30616"/>
    </ligand>
</feature>
<feature type="binding site" evidence="1">
    <location>
        <position position="124"/>
    </location>
    <ligand>
        <name>ATP</name>
        <dbReference type="ChEBI" id="CHEBI:30616"/>
    </ligand>
</feature>
<feature type="binding site" evidence="1">
    <location>
        <position position="136"/>
    </location>
    <ligand>
        <name>ATP</name>
        <dbReference type="ChEBI" id="CHEBI:30616"/>
    </ligand>
</feature>
<feature type="binding site" evidence="1">
    <location>
        <position position="137"/>
    </location>
    <ligand>
        <name>ATP</name>
        <dbReference type="ChEBI" id="CHEBI:30616"/>
    </ligand>
</feature>
<feature type="binding site" evidence="1">
    <location>
        <position position="187"/>
    </location>
    <ligand>
        <name>ATP</name>
        <dbReference type="ChEBI" id="CHEBI:30616"/>
    </ligand>
</feature>
<feature type="binding site" evidence="1">
    <location>
        <position position="194"/>
    </location>
    <ligand>
        <name>ATP</name>
        <dbReference type="ChEBI" id="CHEBI:30616"/>
    </ligand>
</feature>
<feature type="binding site" evidence="1">
    <location>
        <position position="269"/>
    </location>
    <ligand>
        <name>Mg(2+)</name>
        <dbReference type="ChEBI" id="CHEBI:18420"/>
    </ligand>
</feature>
<feature type="binding site" evidence="1">
    <location>
        <position position="278"/>
    </location>
    <ligand>
        <name>ATP</name>
        <dbReference type="ChEBI" id="CHEBI:30616"/>
    </ligand>
</feature>
<feature type="binding site" evidence="1">
    <location>
        <position position="278"/>
    </location>
    <ligand>
        <name>Mg(2+)</name>
        <dbReference type="ChEBI" id="CHEBI:18420"/>
    </ligand>
</feature>
<accession>Q8FP92</accession>
<dbReference type="EC" id="2.7.7.-" evidence="1"/>
<dbReference type="EC" id="2.7.7.108" evidence="1"/>
<dbReference type="EMBL" id="BA000035">
    <property type="protein sequence ID" value="BAC18703.1"/>
    <property type="molecule type" value="Genomic_DNA"/>
</dbReference>
<dbReference type="RefSeq" id="WP_006767894.1">
    <property type="nucleotide sequence ID" value="NC_004369.1"/>
</dbReference>
<dbReference type="SMR" id="Q8FP92"/>
<dbReference type="STRING" id="196164.gene:10742321"/>
<dbReference type="KEGG" id="cef:CE1893"/>
<dbReference type="eggNOG" id="COG0397">
    <property type="taxonomic scope" value="Bacteria"/>
</dbReference>
<dbReference type="HOGENOM" id="CLU_010245_4_1_11"/>
<dbReference type="OrthoDB" id="9776281at2"/>
<dbReference type="Proteomes" id="UP000001409">
    <property type="component" value="Chromosome"/>
</dbReference>
<dbReference type="GO" id="GO:0070733">
    <property type="term" value="F:AMPylase activity"/>
    <property type="evidence" value="ECO:0007669"/>
    <property type="project" value="RHEA"/>
</dbReference>
<dbReference type="GO" id="GO:0005524">
    <property type="term" value="F:ATP binding"/>
    <property type="evidence" value="ECO:0007669"/>
    <property type="project" value="UniProtKB-UniRule"/>
</dbReference>
<dbReference type="GO" id="GO:0000287">
    <property type="term" value="F:magnesium ion binding"/>
    <property type="evidence" value="ECO:0007669"/>
    <property type="project" value="UniProtKB-UniRule"/>
</dbReference>
<dbReference type="HAMAP" id="MF_00692">
    <property type="entry name" value="YdiU_SelO"/>
    <property type="match status" value="1"/>
</dbReference>
<dbReference type="InterPro" id="IPR003846">
    <property type="entry name" value="SelO"/>
</dbReference>
<dbReference type="NCBIfam" id="NF000658">
    <property type="entry name" value="PRK00029.1"/>
    <property type="match status" value="1"/>
</dbReference>
<dbReference type="PANTHER" id="PTHR32057">
    <property type="entry name" value="PROTEIN ADENYLYLTRANSFERASE SELO, MITOCHONDRIAL"/>
    <property type="match status" value="1"/>
</dbReference>
<dbReference type="PANTHER" id="PTHR32057:SF14">
    <property type="entry name" value="PROTEIN ADENYLYLTRANSFERASE SELO, MITOCHONDRIAL"/>
    <property type="match status" value="1"/>
</dbReference>
<dbReference type="Pfam" id="PF02696">
    <property type="entry name" value="SelO"/>
    <property type="match status" value="1"/>
</dbReference>
<sequence>MSTPTNPEQPTDHPSAPFTLEARFAEEFPEMTTPWRGEDQPDPELAVLNEDLARLLGIDPDWLRSPAGVEFLLGLNPEPTTEMVAQGYAGHQFGQFVPSLGDGRALLLGEIRGTDGVLRDIHLKGSGRTRYSRGADGRAALGPALREYLVSEAMHALGVPTTRALAVVTTGRKIQRDRVLPGAVVVRVATSHIRVGSFQYANITGGIDLSRRLADHAITRHYPRLVERFPESGPERYAWFFRQVMDAQAQTVARWMRLGFVHGVLNTDNTLVSGETIDYGPCAFMDRYREDAVFSSIDTHGRYKFSNQPLILGWNLARLAETLIPLFGDTPDAGVDRAQEMINTFTDRYNDALHAELAAGLGLDADAPDTAGLIESYLELMRTHSPDVTTLNRTLSEWSVESTPPAGFEEWIPRWLAAQPDLINMQKTNPVYVPRNHLVEDALAEAVEGRWEAFTTLLGLVTDPFTRQAGMEVYERPGPDGFEDTYMTFCGT</sequence>